<dbReference type="EC" id="1.3.1.89" evidence="1"/>
<dbReference type="EC" id="1.3.1.-" evidence="3"/>
<dbReference type="EMBL" id="GG704916">
    <property type="protein sequence ID" value="KJF61475.1"/>
    <property type="molecule type" value="Genomic_DNA"/>
</dbReference>
<dbReference type="RefSeq" id="XP_004446330.1">
    <property type="nucleotide sequence ID" value="XM_004446273.1"/>
</dbReference>
<dbReference type="SMR" id="Q1E2F4"/>
<dbReference type="FunCoup" id="Q1E2F4">
    <property type="interactions" value="866"/>
</dbReference>
<dbReference type="STRING" id="246410.Q1E2F4"/>
<dbReference type="GeneID" id="4564848"/>
<dbReference type="KEGG" id="cim:CIMG_03259"/>
<dbReference type="VEuPathDB" id="FungiDB:CIMG_03259"/>
<dbReference type="InParanoid" id="Q1E2F4"/>
<dbReference type="OrthoDB" id="259935at2759"/>
<dbReference type="Proteomes" id="UP000001261">
    <property type="component" value="Unassembled WGS sequence"/>
</dbReference>
<dbReference type="GO" id="GO:0005737">
    <property type="term" value="C:cytoplasm"/>
    <property type="evidence" value="ECO:0007669"/>
    <property type="project" value="UniProtKB-SubCell"/>
</dbReference>
<dbReference type="GO" id="GO:0005634">
    <property type="term" value="C:nucleus"/>
    <property type="evidence" value="ECO:0007669"/>
    <property type="project" value="UniProtKB-SubCell"/>
</dbReference>
<dbReference type="GO" id="GO:0050660">
    <property type="term" value="F:flavin adenine dinucleotide binding"/>
    <property type="evidence" value="ECO:0007669"/>
    <property type="project" value="InterPro"/>
</dbReference>
<dbReference type="GO" id="GO:0106414">
    <property type="term" value="F:mRNA dihydrouridine synthase activity"/>
    <property type="evidence" value="ECO:0007669"/>
    <property type="project" value="RHEA"/>
</dbReference>
<dbReference type="GO" id="GO:0003723">
    <property type="term" value="F:RNA binding"/>
    <property type="evidence" value="ECO:0007669"/>
    <property type="project" value="TreeGrafter"/>
</dbReference>
<dbReference type="GO" id="GO:0102265">
    <property type="term" value="F:tRNA-dihydrouridine47 synthase activity"/>
    <property type="evidence" value="ECO:0007669"/>
    <property type="project" value="UniProtKB-EC"/>
</dbReference>
<dbReference type="GO" id="GO:0008270">
    <property type="term" value="F:zinc ion binding"/>
    <property type="evidence" value="ECO:0007669"/>
    <property type="project" value="UniProtKB-KW"/>
</dbReference>
<dbReference type="GO" id="GO:0006397">
    <property type="term" value="P:mRNA processing"/>
    <property type="evidence" value="ECO:0007669"/>
    <property type="project" value="UniProtKB-KW"/>
</dbReference>
<dbReference type="CDD" id="cd02801">
    <property type="entry name" value="DUS_like_FMN"/>
    <property type="match status" value="1"/>
</dbReference>
<dbReference type="FunFam" id="3.20.20.70:FF:000145">
    <property type="entry name" value="tRNA-dihydrouridine(47) synthase [NAD(P)(+)]"/>
    <property type="match status" value="1"/>
</dbReference>
<dbReference type="Gene3D" id="3.20.20.70">
    <property type="entry name" value="Aldolase class I"/>
    <property type="match status" value="1"/>
</dbReference>
<dbReference type="InterPro" id="IPR013785">
    <property type="entry name" value="Aldolase_TIM"/>
</dbReference>
<dbReference type="InterPro" id="IPR035587">
    <property type="entry name" value="DUS-like_FMN-bd"/>
</dbReference>
<dbReference type="InterPro" id="IPR018517">
    <property type="entry name" value="tRNA_hU_synthase_CS"/>
</dbReference>
<dbReference type="InterPro" id="IPR000571">
    <property type="entry name" value="Znf_CCCH"/>
</dbReference>
<dbReference type="PANTHER" id="PTHR45846">
    <property type="entry name" value="TRNA-DIHYDROURIDINE(47) SYNTHASE [NAD(P)(+)]-LIKE"/>
    <property type="match status" value="1"/>
</dbReference>
<dbReference type="PANTHER" id="PTHR45846:SF1">
    <property type="entry name" value="TRNA-DIHYDROURIDINE(47) SYNTHASE [NAD(P)(+)]-LIKE"/>
    <property type="match status" value="1"/>
</dbReference>
<dbReference type="Pfam" id="PF01207">
    <property type="entry name" value="Dus"/>
    <property type="match status" value="2"/>
</dbReference>
<dbReference type="SUPFAM" id="SSF51395">
    <property type="entry name" value="FMN-linked oxidoreductases"/>
    <property type="match status" value="1"/>
</dbReference>
<dbReference type="PROSITE" id="PS01136">
    <property type="entry name" value="UPF0034"/>
    <property type="match status" value="1"/>
</dbReference>
<dbReference type="PROSITE" id="PS50103">
    <property type="entry name" value="ZF_C3H1"/>
    <property type="match status" value="1"/>
</dbReference>
<gene>
    <name type="primary">DUS3</name>
    <name type="ORF">CIMG_03259</name>
</gene>
<protein>
    <recommendedName>
        <fullName>tRNA-dihydrouridine(47) synthase [NAD(P)(+)]</fullName>
        <ecNumber evidence="1">1.3.1.89</ecNumber>
    </recommendedName>
    <alternativeName>
        <fullName>mRNA-dihydrouridine synthase DUS3</fullName>
        <ecNumber evidence="3">1.3.1.-</ecNumber>
    </alternativeName>
    <alternativeName>
        <fullName>tRNA-dihydrouridine synthase 3</fullName>
    </alternativeName>
</protein>
<evidence type="ECO:0000250" key="1">
    <source>
        <dbReference type="UniProtKB" id="Q06053"/>
    </source>
</evidence>
<evidence type="ECO:0000250" key="2">
    <source>
        <dbReference type="UniProtKB" id="Q5SMC7"/>
    </source>
</evidence>
<evidence type="ECO:0000250" key="3">
    <source>
        <dbReference type="UniProtKB" id="Q9UTH9"/>
    </source>
</evidence>
<evidence type="ECO:0000255" key="4">
    <source>
        <dbReference type="PROSITE-ProRule" id="PRU00723"/>
    </source>
</evidence>
<evidence type="ECO:0000256" key="5">
    <source>
        <dbReference type="SAM" id="MobiDB-lite"/>
    </source>
</evidence>
<evidence type="ECO:0000305" key="6"/>
<accession>Q1E2F4</accession>
<accession>A0A0D8JVX3</accession>
<accession>I9XMQ7</accession>
<name>DUS3_COCIM</name>
<keyword id="KW-0963">Cytoplasm</keyword>
<keyword id="KW-0285">Flavoprotein</keyword>
<keyword id="KW-0288">FMN</keyword>
<keyword id="KW-0479">Metal-binding</keyword>
<keyword id="KW-0507">mRNA processing</keyword>
<keyword id="KW-0520">NAD</keyword>
<keyword id="KW-0521">NADP</keyword>
<keyword id="KW-0539">Nucleus</keyword>
<keyword id="KW-0560">Oxidoreductase</keyword>
<keyword id="KW-1185">Reference proteome</keyword>
<keyword id="KW-0677">Repeat</keyword>
<keyword id="KW-0819">tRNA processing</keyword>
<keyword id="KW-0862">Zinc</keyword>
<keyword id="KW-0863">Zinc-finger</keyword>
<comment type="function">
    <text evidence="1 3">Catalyzes the synthesis of dihydrouridine, a modified base found in the D-loop of most tRNAs. Specifically modifies U47 in cytoplasmic tRNAs (By similarity). Catalyzes the synthesis of dihydrouridine in some mRNAs, thereby affecting their translation (By similarity).</text>
</comment>
<comment type="catalytic activity">
    <reaction evidence="1">
        <text>5,6-dihydrouridine(47) in tRNA + NAD(+) = uridine(47) in tRNA + NADH + H(+)</text>
        <dbReference type="Rhea" id="RHEA:53364"/>
        <dbReference type="Rhea" id="RHEA-COMP:13539"/>
        <dbReference type="Rhea" id="RHEA-COMP:13540"/>
        <dbReference type="ChEBI" id="CHEBI:15378"/>
        <dbReference type="ChEBI" id="CHEBI:57540"/>
        <dbReference type="ChEBI" id="CHEBI:57945"/>
        <dbReference type="ChEBI" id="CHEBI:65315"/>
        <dbReference type="ChEBI" id="CHEBI:74443"/>
        <dbReference type="EC" id="1.3.1.89"/>
    </reaction>
    <physiologicalReaction direction="right-to-left" evidence="1">
        <dbReference type="Rhea" id="RHEA:53366"/>
    </physiologicalReaction>
</comment>
<comment type="catalytic activity">
    <reaction evidence="1">
        <text>5,6-dihydrouridine(47) in tRNA + NADP(+) = uridine(47) in tRNA + NADPH + H(+)</text>
        <dbReference type="Rhea" id="RHEA:53360"/>
        <dbReference type="Rhea" id="RHEA-COMP:13539"/>
        <dbReference type="Rhea" id="RHEA-COMP:13540"/>
        <dbReference type="ChEBI" id="CHEBI:15378"/>
        <dbReference type="ChEBI" id="CHEBI:57783"/>
        <dbReference type="ChEBI" id="CHEBI:58349"/>
        <dbReference type="ChEBI" id="CHEBI:65315"/>
        <dbReference type="ChEBI" id="CHEBI:74443"/>
        <dbReference type="EC" id="1.3.1.89"/>
    </reaction>
    <physiologicalReaction direction="right-to-left" evidence="1">
        <dbReference type="Rhea" id="RHEA:53362"/>
    </physiologicalReaction>
</comment>
<comment type="catalytic activity">
    <reaction evidence="3">
        <text>a 5,6-dihydrouridine in mRNA + NAD(+) = a uridine in mRNA + NADH + H(+)</text>
        <dbReference type="Rhea" id="RHEA:69851"/>
        <dbReference type="Rhea" id="RHEA-COMP:14658"/>
        <dbReference type="Rhea" id="RHEA-COMP:17789"/>
        <dbReference type="ChEBI" id="CHEBI:15378"/>
        <dbReference type="ChEBI" id="CHEBI:57540"/>
        <dbReference type="ChEBI" id="CHEBI:57945"/>
        <dbReference type="ChEBI" id="CHEBI:65315"/>
        <dbReference type="ChEBI" id="CHEBI:74443"/>
    </reaction>
    <physiologicalReaction direction="right-to-left" evidence="3">
        <dbReference type="Rhea" id="RHEA:69853"/>
    </physiologicalReaction>
</comment>
<comment type="catalytic activity">
    <reaction evidence="3">
        <text>a 5,6-dihydrouridine in mRNA + NADP(+) = a uridine in mRNA + NADPH + H(+)</text>
        <dbReference type="Rhea" id="RHEA:69855"/>
        <dbReference type="Rhea" id="RHEA-COMP:14658"/>
        <dbReference type="Rhea" id="RHEA-COMP:17789"/>
        <dbReference type="ChEBI" id="CHEBI:15378"/>
        <dbReference type="ChEBI" id="CHEBI:57783"/>
        <dbReference type="ChEBI" id="CHEBI:58349"/>
        <dbReference type="ChEBI" id="CHEBI:65315"/>
        <dbReference type="ChEBI" id="CHEBI:74443"/>
    </reaction>
    <physiologicalReaction direction="right-to-left" evidence="3">
        <dbReference type="Rhea" id="RHEA:69857"/>
    </physiologicalReaction>
</comment>
<comment type="cofactor">
    <cofactor evidence="2">
        <name>FMN</name>
        <dbReference type="ChEBI" id="CHEBI:58210"/>
    </cofactor>
</comment>
<comment type="subcellular location">
    <subcellularLocation>
        <location evidence="1">Cytoplasm</location>
    </subcellularLocation>
    <subcellularLocation>
        <location evidence="1">Nucleus</location>
    </subcellularLocation>
</comment>
<comment type="similarity">
    <text evidence="6">Belongs to the Dus family. Dus3 subfamily.</text>
</comment>
<feature type="chain" id="PRO_0000330235" description="tRNA-dihydrouridine(47) synthase [NAD(P)(+)]">
    <location>
        <begin position="1"/>
        <end position="724"/>
    </location>
</feature>
<feature type="zinc finger region" description="C3H1-type 1" evidence="4">
    <location>
        <begin position="120"/>
        <end position="153"/>
    </location>
</feature>
<feature type="zinc finger region" description="C3H1-type 2" evidence="4">
    <location>
        <begin position="171"/>
        <end position="192"/>
    </location>
</feature>
<feature type="region of interest" description="Disordered" evidence="5">
    <location>
        <begin position="1"/>
        <end position="135"/>
    </location>
</feature>
<feature type="compositionally biased region" description="Polar residues" evidence="5">
    <location>
        <begin position="1"/>
        <end position="12"/>
    </location>
</feature>
<feature type="compositionally biased region" description="Basic and acidic residues" evidence="5">
    <location>
        <begin position="29"/>
        <end position="41"/>
    </location>
</feature>
<feature type="compositionally biased region" description="Basic and acidic residues" evidence="5">
    <location>
        <begin position="88"/>
        <end position="101"/>
    </location>
</feature>
<feature type="active site" description="Proton donor" evidence="2">
    <location>
        <position position="428"/>
    </location>
</feature>
<feature type="binding site" evidence="2">
    <location>
        <begin position="321"/>
        <end position="323"/>
    </location>
    <ligand>
        <name>FMN</name>
        <dbReference type="ChEBI" id="CHEBI:58210"/>
    </ligand>
</feature>
<feature type="binding site" evidence="2">
    <location>
        <position position="396"/>
    </location>
    <ligand>
        <name>FMN</name>
        <dbReference type="ChEBI" id="CHEBI:58210"/>
    </ligand>
</feature>
<feature type="binding site" evidence="2">
    <location>
        <position position="468"/>
    </location>
    <ligand>
        <name>FMN</name>
        <dbReference type="ChEBI" id="CHEBI:58210"/>
    </ligand>
</feature>
<feature type="binding site" evidence="2">
    <location>
        <position position="510"/>
    </location>
    <ligand>
        <name>FMN</name>
        <dbReference type="ChEBI" id="CHEBI:58210"/>
    </ligand>
</feature>
<feature type="binding site" evidence="2">
    <location>
        <begin position="567"/>
        <end position="569"/>
    </location>
    <ligand>
        <name>FMN</name>
        <dbReference type="ChEBI" id="CHEBI:58210"/>
    </ligand>
</feature>
<feature type="binding site" evidence="2">
    <location>
        <begin position="591"/>
        <end position="592"/>
    </location>
    <ligand>
        <name>FMN</name>
        <dbReference type="ChEBI" id="CHEBI:58210"/>
    </ligand>
</feature>
<organism>
    <name type="scientific">Coccidioides immitis (strain RS)</name>
    <name type="common">Valley fever fungus</name>
    <dbReference type="NCBI Taxonomy" id="246410"/>
    <lineage>
        <taxon>Eukaryota</taxon>
        <taxon>Fungi</taxon>
        <taxon>Dikarya</taxon>
        <taxon>Ascomycota</taxon>
        <taxon>Pezizomycotina</taxon>
        <taxon>Eurotiomycetes</taxon>
        <taxon>Eurotiomycetidae</taxon>
        <taxon>Onygenales</taxon>
        <taxon>Onygenaceae</taxon>
        <taxon>Coccidioides</taxon>
    </lineage>
</organism>
<reference key="1">
    <citation type="journal article" date="2009" name="Genome Res.">
        <title>Comparative genomic analyses of the human fungal pathogens Coccidioides and their relatives.</title>
        <authorList>
            <person name="Sharpton T.J."/>
            <person name="Stajich J.E."/>
            <person name="Rounsley S.D."/>
            <person name="Gardner M.J."/>
            <person name="Wortman J.R."/>
            <person name="Jordar V.S."/>
            <person name="Maiti R."/>
            <person name="Kodira C.D."/>
            <person name="Neafsey D.E."/>
            <person name="Zeng Q."/>
            <person name="Hung C.-Y."/>
            <person name="McMahan C."/>
            <person name="Muszewska A."/>
            <person name="Grynberg M."/>
            <person name="Mandel M.A."/>
            <person name="Kellner E.M."/>
            <person name="Barker B.M."/>
            <person name="Galgiani J.N."/>
            <person name="Orbach M.J."/>
            <person name="Kirkland T.N."/>
            <person name="Cole G.T."/>
            <person name="Henn M.R."/>
            <person name="Birren B.W."/>
            <person name="Taylor J.W."/>
        </authorList>
    </citation>
    <scope>NUCLEOTIDE SEQUENCE [LARGE SCALE GENOMIC DNA]</scope>
    <source>
        <strain>RS</strain>
    </source>
</reference>
<reference key="2">
    <citation type="journal article" date="2010" name="Genome Res.">
        <title>Population genomic sequencing of Coccidioides fungi reveals recent hybridization and transposon control.</title>
        <authorList>
            <person name="Neafsey D.E."/>
            <person name="Barker B.M."/>
            <person name="Sharpton T.J."/>
            <person name="Stajich J.E."/>
            <person name="Park D.J."/>
            <person name="Whiston E."/>
            <person name="Hung C.-Y."/>
            <person name="McMahan C."/>
            <person name="White J."/>
            <person name="Sykes S."/>
            <person name="Heiman D."/>
            <person name="Young S."/>
            <person name="Zeng Q."/>
            <person name="Abouelleil A."/>
            <person name="Aftuck L."/>
            <person name="Bessette D."/>
            <person name="Brown A."/>
            <person name="FitzGerald M."/>
            <person name="Lui A."/>
            <person name="Macdonald J.P."/>
            <person name="Priest M."/>
            <person name="Orbach M.J."/>
            <person name="Galgiani J.N."/>
            <person name="Kirkland T.N."/>
            <person name="Cole G.T."/>
            <person name="Birren B.W."/>
            <person name="Henn M.R."/>
            <person name="Taylor J.W."/>
            <person name="Rounsley S.D."/>
        </authorList>
    </citation>
    <scope>GENOME REANNOTATION</scope>
    <source>
        <strain>RS</strain>
    </source>
</reference>
<sequence length="724" mass="81902">MTQSFPNETTLNDGAKRLENEGSGNFEESPAKRIKLDKPENPIHAQPENNGAQRKKGTAPIREEYLVRSGQEPSVKQTSDVRDDDEAEAARHQERAGEKGGKQRKKQKGQNTARKFGKSQDEKGLCQSVSHSPELSPRTCQFGDNCRFEHNLRKYLKEYKREDLKTFNGMCPVWDAYGLCFSGWKCRFVGSHMTERELEDGRKELVLVEDEERKNAAMPLVEGGAEGGVFNSISTEQKVDLMKKRRKTPKSDAYTTWLDETSKQLEIHNHGRRFADENNVEANGEARDEVEDRRAQFKEPPFLPSEKRRLYFGSETPVLAPLTTQGNLPFRRLCVELGAQFTYSEMAMSLPIVQGHKGEWALMKAHQSEVLPPTIKPNQGVVKDYDHSRDLKFGVQISANKPWQALKATEVMTALCPHLRVVDLNCGCPIDLVYRDGAGSALLEHPSKLEKILRGMNAVSNEVPVSAKIRMGTKDNSPTALKLIERLVLGGPEFTEIGQGPAGVAAITLHGRSRQQRYTREADWSYISECAALIRRLNERSDDLTDTIREADDRLQAPGRRVYFLGNGDCYSHEDYYRAIGESGVDTVMIARGALMKPWIFEEIQAGQYLDKSASERLSIVEKFAKYGLNAWGSDEHGVGTTRRFLLELLSFTHRYIPIGLLEHLPPRIQDRPPAYKGRNELETLLASDNYKDWIKISEMFLGPAHKDFKFEPKHKSNSYEIEG</sequence>
<proteinExistence type="inferred from homology"/>